<feature type="signal peptide" evidence="2">
    <location>
        <begin position="1"/>
        <end position="28"/>
    </location>
</feature>
<feature type="chain" id="PRO_0000030907" description="Ribonuclease 8">
    <location>
        <begin position="29"/>
        <end position="155"/>
    </location>
</feature>
<feature type="active site" description="Proton donor" evidence="1">
    <location>
        <position position="150"/>
    </location>
</feature>
<feature type="binding site" evidence="1">
    <location>
        <begin position="66"/>
        <end position="70"/>
    </location>
    <ligand>
        <name>substrate</name>
    </ligand>
</feature>
<feature type="binding site" evidence="1">
    <location>
        <position position="91"/>
    </location>
    <ligand>
        <name>substrate</name>
    </ligand>
</feature>
<feature type="site" description="Ancestral active site">
    <location>
        <position position="43"/>
    </location>
</feature>
<feature type="disulfide bond" evidence="1">
    <location>
        <begin position="65"/>
        <end position="119"/>
    </location>
</feature>
<feature type="disulfide bond" evidence="1">
    <location>
        <begin position="83"/>
        <end position="134"/>
    </location>
</feature>
<feature type="disulfide bond" evidence="1">
    <location>
        <begin position="90"/>
        <end position="97"/>
    </location>
</feature>
<gene>
    <name type="primary">RNASE8</name>
</gene>
<dbReference type="EC" id="3.1.27.-"/>
<dbReference type="EMBL" id="AF473861">
    <property type="protein sequence ID" value="AAL89650.1"/>
    <property type="molecule type" value="Genomic_DNA"/>
</dbReference>
<dbReference type="SMR" id="Q8SPZ4"/>
<dbReference type="GO" id="GO:0005615">
    <property type="term" value="C:extracellular space"/>
    <property type="evidence" value="ECO:0007669"/>
    <property type="project" value="TreeGrafter"/>
</dbReference>
<dbReference type="GO" id="GO:0004519">
    <property type="term" value="F:endonuclease activity"/>
    <property type="evidence" value="ECO:0007669"/>
    <property type="project" value="UniProtKB-KW"/>
</dbReference>
<dbReference type="GO" id="GO:0003676">
    <property type="term" value="F:nucleic acid binding"/>
    <property type="evidence" value="ECO:0007669"/>
    <property type="project" value="InterPro"/>
</dbReference>
<dbReference type="GO" id="GO:0004540">
    <property type="term" value="F:RNA nuclease activity"/>
    <property type="evidence" value="ECO:0007669"/>
    <property type="project" value="TreeGrafter"/>
</dbReference>
<dbReference type="GO" id="GO:0050832">
    <property type="term" value="P:defense response to fungus"/>
    <property type="evidence" value="ECO:0007669"/>
    <property type="project" value="TreeGrafter"/>
</dbReference>
<dbReference type="GO" id="GO:0050829">
    <property type="term" value="P:defense response to Gram-negative bacterium"/>
    <property type="evidence" value="ECO:0007669"/>
    <property type="project" value="TreeGrafter"/>
</dbReference>
<dbReference type="GO" id="GO:0050830">
    <property type="term" value="P:defense response to Gram-positive bacterium"/>
    <property type="evidence" value="ECO:0007669"/>
    <property type="project" value="TreeGrafter"/>
</dbReference>
<dbReference type="GO" id="GO:0045087">
    <property type="term" value="P:innate immune response"/>
    <property type="evidence" value="ECO:0007669"/>
    <property type="project" value="TreeGrafter"/>
</dbReference>
<dbReference type="CDD" id="cd06265">
    <property type="entry name" value="RNase_A_canonical"/>
    <property type="match status" value="1"/>
</dbReference>
<dbReference type="FunFam" id="3.10.130.10:FF:000001">
    <property type="entry name" value="Ribonuclease pancreatic"/>
    <property type="match status" value="1"/>
</dbReference>
<dbReference type="Gene3D" id="3.10.130.10">
    <property type="entry name" value="Ribonuclease A-like domain"/>
    <property type="match status" value="1"/>
</dbReference>
<dbReference type="InterPro" id="IPR001427">
    <property type="entry name" value="RNaseA"/>
</dbReference>
<dbReference type="InterPro" id="IPR036816">
    <property type="entry name" value="RNaseA-like_dom_sf"/>
</dbReference>
<dbReference type="InterPro" id="IPR023411">
    <property type="entry name" value="RNaseA_AS"/>
</dbReference>
<dbReference type="InterPro" id="IPR023412">
    <property type="entry name" value="RNaseA_domain"/>
</dbReference>
<dbReference type="PANTHER" id="PTHR11437">
    <property type="entry name" value="RIBONUCLEASE"/>
    <property type="match status" value="1"/>
</dbReference>
<dbReference type="PANTHER" id="PTHR11437:SF31">
    <property type="entry name" value="RIBONUCLEASE 7"/>
    <property type="match status" value="1"/>
</dbReference>
<dbReference type="Pfam" id="PF00074">
    <property type="entry name" value="RnaseA"/>
    <property type="match status" value="1"/>
</dbReference>
<dbReference type="PRINTS" id="PR00794">
    <property type="entry name" value="RIBONUCLEASE"/>
</dbReference>
<dbReference type="SMART" id="SM00092">
    <property type="entry name" value="RNAse_Pc"/>
    <property type="match status" value="1"/>
</dbReference>
<dbReference type="SUPFAM" id="SSF54076">
    <property type="entry name" value="RNase A-like"/>
    <property type="match status" value="1"/>
</dbReference>
<dbReference type="PROSITE" id="PS00127">
    <property type="entry name" value="RNASE_PANCREATIC"/>
    <property type="match status" value="1"/>
</dbReference>
<organism>
    <name type="scientific">Saguinus oedipus</name>
    <name type="common">Cotton-top tamarin</name>
    <dbReference type="NCBI Taxonomy" id="9490"/>
    <lineage>
        <taxon>Eukaryota</taxon>
        <taxon>Metazoa</taxon>
        <taxon>Chordata</taxon>
        <taxon>Craniata</taxon>
        <taxon>Vertebrata</taxon>
        <taxon>Euteleostomi</taxon>
        <taxon>Mammalia</taxon>
        <taxon>Eutheria</taxon>
        <taxon>Euarchontoglires</taxon>
        <taxon>Primates</taxon>
        <taxon>Haplorrhini</taxon>
        <taxon>Platyrrhini</taxon>
        <taxon>Cebidae</taxon>
        <taxon>Callitrichinae</taxon>
        <taxon>Saguinus</taxon>
    </lineage>
</organism>
<keyword id="KW-1015">Disulfide bond</keyword>
<keyword id="KW-0255">Endonuclease</keyword>
<keyword id="KW-0378">Hydrolase</keyword>
<keyword id="KW-0540">Nuclease</keyword>
<keyword id="KW-0964">Secreted</keyword>
<keyword id="KW-0732">Signal</keyword>
<accession>Q8SPZ4</accession>
<name>RNAS8_SAGOE</name>
<sequence>MAPARAGCCPLLLLLLLGLWVAEIPVSAKPESMTPSQWFKTQDVQPSPQACDSAMRNINNYKKWCKDLNTFLHEPFSSVAATCQTPNITCKNGHKNCHQSHRPVSLTMCGLISGKYLNCKYKEEHQNKSYIVACDPPQQGDPEYPLVPVHLDKVV</sequence>
<reference key="1">
    <citation type="journal article" date="2002" name="Nucleic Acids Res.">
        <title>RNase 8, a novel RNase A superfamily ribonuclease expressed uniquely in placenta.</title>
        <authorList>
            <person name="Zhang J."/>
            <person name="Dyer K.D."/>
            <person name="Rosenberg H.F."/>
        </authorList>
    </citation>
    <scope>NUCLEOTIDE SEQUENCE [GENOMIC DNA]</scope>
</reference>
<comment type="function">
    <text evidence="1">Has a low ribonuclease activity.</text>
</comment>
<comment type="subcellular location">
    <subcellularLocation>
        <location evidence="3">Secreted</location>
    </subcellularLocation>
</comment>
<comment type="similarity">
    <text evidence="3">Belongs to the pancreatic ribonuclease family.</text>
</comment>
<comment type="caution">
    <text evidence="3">May have lost its catalytic activity.</text>
</comment>
<protein>
    <recommendedName>
        <fullName>Ribonuclease 8</fullName>
        <shortName>RNase 8</shortName>
        <ecNumber>3.1.27.-</ecNumber>
    </recommendedName>
</protein>
<proteinExistence type="inferred from homology"/>
<evidence type="ECO:0000250" key="1"/>
<evidence type="ECO:0000255" key="2"/>
<evidence type="ECO:0000305" key="3"/>